<feature type="chain" id="PRO_1000068464" description="Glutathione-regulated potassium-efflux system ancillary protein KefF">
    <location>
        <begin position="1"/>
        <end position="176"/>
    </location>
</feature>
<feature type="binding site" evidence="1">
    <location>
        <position position="8"/>
    </location>
    <ligand>
        <name>FMN</name>
        <dbReference type="ChEBI" id="CHEBI:58210"/>
    </ligand>
</feature>
<feature type="binding site" evidence="1">
    <location>
        <begin position="14"/>
        <end position="17"/>
    </location>
    <ligand>
        <name>FMN</name>
        <dbReference type="ChEBI" id="CHEBI:58210"/>
    </ligand>
</feature>
<feature type="binding site" evidence="1">
    <location>
        <begin position="65"/>
        <end position="68"/>
    </location>
    <ligand>
        <name>FMN</name>
        <dbReference type="ChEBI" id="CHEBI:58210"/>
    </ligand>
</feature>
<feature type="binding site" evidence="1">
    <location>
        <begin position="105"/>
        <end position="108"/>
    </location>
    <ligand>
        <name>FMN</name>
        <dbReference type="ChEBI" id="CHEBI:58210"/>
    </ligand>
</feature>
<gene>
    <name evidence="1" type="primary">kefF</name>
    <name type="ordered locus">EcHS_A0052</name>
</gene>
<reference key="1">
    <citation type="journal article" date="2008" name="J. Bacteriol.">
        <title>The pangenome structure of Escherichia coli: comparative genomic analysis of E. coli commensal and pathogenic isolates.</title>
        <authorList>
            <person name="Rasko D.A."/>
            <person name="Rosovitz M.J."/>
            <person name="Myers G.S.A."/>
            <person name="Mongodin E.F."/>
            <person name="Fricke W.F."/>
            <person name="Gajer P."/>
            <person name="Crabtree J."/>
            <person name="Sebaihia M."/>
            <person name="Thomson N.R."/>
            <person name="Chaudhuri R."/>
            <person name="Henderson I.R."/>
            <person name="Sperandio V."/>
            <person name="Ravel J."/>
        </authorList>
    </citation>
    <scope>NUCLEOTIDE SEQUENCE [LARGE SCALE GENOMIC DNA]</scope>
    <source>
        <strain>HS</strain>
    </source>
</reference>
<organism>
    <name type="scientific">Escherichia coli O9:H4 (strain HS)</name>
    <dbReference type="NCBI Taxonomy" id="331112"/>
    <lineage>
        <taxon>Bacteria</taxon>
        <taxon>Pseudomonadati</taxon>
        <taxon>Pseudomonadota</taxon>
        <taxon>Gammaproteobacteria</taxon>
        <taxon>Enterobacterales</taxon>
        <taxon>Enterobacteriaceae</taxon>
        <taxon>Escherichia</taxon>
    </lineage>
</organism>
<proteinExistence type="inferred from homology"/>
<sequence>MILIIYAHPYPHHSHANKRMLEQARTLEGVEIRSLYQLYPDFNIDIAAEQEALSRADLIVWQHPMQWYSIPPLLKLWIDKVFSHGWAYGHGGTALHGKHLLWAVTTGGGESHFEIGAHPGFDVLSQPLQATAIYCGLNWLPPFAMHCTFICDDETLEGQARHYKQRLLEWQEAHHG</sequence>
<protein>
    <recommendedName>
        <fullName evidence="1">Glutathione-regulated potassium-efflux system ancillary protein KefF</fullName>
    </recommendedName>
    <alternativeName>
        <fullName evidence="1">Quinone oxidoreductase KefF</fullName>
        <ecNumber evidence="1">1.6.5.2</ecNumber>
    </alternativeName>
</protein>
<dbReference type="EC" id="1.6.5.2" evidence="1"/>
<dbReference type="EMBL" id="CP000802">
    <property type="protein sequence ID" value="ABV04452.1"/>
    <property type="molecule type" value="Genomic_DNA"/>
</dbReference>
<dbReference type="RefSeq" id="WP_000600725.1">
    <property type="nucleotide sequence ID" value="NC_009800.1"/>
</dbReference>
<dbReference type="SMR" id="A7ZVZ8"/>
<dbReference type="GeneID" id="89519427"/>
<dbReference type="KEGG" id="ecx:EcHS_A0052"/>
<dbReference type="HOGENOM" id="CLU_058643_0_2_6"/>
<dbReference type="GO" id="GO:0005886">
    <property type="term" value="C:plasma membrane"/>
    <property type="evidence" value="ECO:0007669"/>
    <property type="project" value="UniProtKB-SubCell"/>
</dbReference>
<dbReference type="GO" id="GO:0009055">
    <property type="term" value="F:electron transfer activity"/>
    <property type="evidence" value="ECO:0007669"/>
    <property type="project" value="TreeGrafter"/>
</dbReference>
<dbReference type="GO" id="GO:0010181">
    <property type="term" value="F:FMN binding"/>
    <property type="evidence" value="ECO:0007669"/>
    <property type="project" value="UniProtKB-UniRule"/>
</dbReference>
<dbReference type="GO" id="GO:0050136">
    <property type="term" value="F:NADH:ubiquinone reductase (non-electrogenic) activity"/>
    <property type="evidence" value="ECO:0007669"/>
    <property type="project" value="RHEA"/>
</dbReference>
<dbReference type="GO" id="GO:0008753">
    <property type="term" value="F:NADPH dehydrogenase (quinone) activity"/>
    <property type="evidence" value="ECO:0007669"/>
    <property type="project" value="RHEA"/>
</dbReference>
<dbReference type="GO" id="GO:1901381">
    <property type="term" value="P:positive regulation of potassium ion transmembrane transport"/>
    <property type="evidence" value="ECO:0007669"/>
    <property type="project" value="UniProtKB-UniRule"/>
</dbReference>
<dbReference type="GO" id="GO:0006813">
    <property type="term" value="P:potassium ion transport"/>
    <property type="evidence" value="ECO:0007669"/>
    <property type="project" value="InterPro"/>
</dbReference>
<dbReference type="FunFam" id="3.40.50.360:FF:000008">
    <property type="entry name" value="Glutathione-regulated potassium-efflux system ancillary protein KefF"/>
    <property type="match status" value="1"/>
</dbReference>
<dbReference type="Gene3D" id="3.40.50.360">
    <property type="match status" value="1"/>
</dbReference>
<dbReference type="HAMAP" id="MF_01414">
    <property type="entry name" value="K_H_efflux_KefF"/>
    <property type="match status" value="1"/>
</dbReference>
<dbReference type="InterPro" id="IPR003680">
    <property type="entry name" value="Flavodoxin_fold"/>
</dbReference>
<dbReference type="InterPro" id="IPR029039">
    <property type="entry name" value="Flavoprotein-like_sf"/>
</dbReference>
<dbReference type="InterPro" id="IPR023948">
    <property type="entry name" value="K_H_efflux_KefF"/>
</dbReference>
<dbReference type="InterPro" id="IPR046980">
    <property type="entry name" value="KefG/KefF"/>
</dbReference>
<dbReference type="NCBIfam" id="NF002044">
    <property type="entry name" value="PRK00871.1"/>
    <property type="match status" value="1"/>
</dbReference>
<dbReference type="PANTHER" id="PTHR47307:SF2">
    <property type="entry name" value="GLUTATHIONE-REGULATED POTASSIUM-EFFLUX SYSTEM ANCILLARY PROTEIN KEFF"/>
    <property type="match status" value="1"/>
</dbReference>
<dbReference type="PANTHER" id="PTHR47307">
    <property type="entry name" value="GLUTATHIONE-REGULATED POTASSIUM-EFFLUX SYSTEM ANCILLARY PROTEIN KEFG"/>
    <property type="match status" value="1"/>
</dbReference>
<dbReference type="Pfam" id="PF02525">
    <property type="entry name" value="Flavodoxin_2"/>
    <property type="match status" value="1"/>
</dbReference>
<dbReference type="SUPFAM" id="SSF52218">
    <property type="entry name" value="Flavoproteins"/>
    <property type="match status" value="1"/>
</dbReference>
<evidence type="ECO:0000255" key="1">
    <source>
        <dbReference type="HAMAP-Rule" id="MF_01414"/>
    </source>
</evidence>
<name>KEFF_ECOHS</name>
<comment type="function">
    <text evidence="1">Regulatory subunit of a potassium efflux system that confers protection against electrophiles. Required for full activity of KefC. Shows redox enzymatic activity, but this enzymatic activity is not required for activation of KefC.</text>
</comment>
<comment type="catalytic activity">
    <reaction evidence="1">
        <text>a quinone + NADH + H(+) = a quinol + NAD(+)</text>
        <dbReference type="Rhea" id="RHEA:46160"/>
        <dbReference type="ChEBI" id="CHEBI:15378"/>
        <dbReference type="ChEBI" id="CHEBI:24646"/>
        <dbReference type="ChEBI" id="CHEBI:57540"/>
        <dbReference type="ChEBI" id="CHEBI:57945"/>
        <dbReference type="ChEBI" id="CHEBI:132124"/>
        <dbReference type="EC" id="1.6.5.2"/>
    </reaction>
</comment>
<comment type="catalytic activity">
    <reaction evidence="1">
        <text>a quinone + NADPH + H(+) = a quinol + NADP(+)</text>
        <dbReference type="Rhea" id="RHEA:46164"/>
        <dbReference type="ChEBI" id="CHEBI:15378"/>
        <dbReference type="ChEBI" id="CHEBI:24646"/>
        <dbReference type="ChEBI" id="CHEBI:57783"/>
        <dbReference type="ChEBI" id="CHEBI:58349"/>
        <dbReference type="ChEBI" id="CHEBI:132124"/>
        <dbReference type="EC" id="1.6.5.2"/>
    </reaction>
</comment>
<comment type="cofactor">
    <cofactor evidence="1">
        <name>FMN</name>
        <dbReference type="ChEBI" id="CHEBI:58210"/>
    </cofactor>
</comment>
<comment type="subunit">
    <text evidence="1">Homodimer. Interacts with KefC.</text>
</comment>
<comment type="subcellular location">
    <subcellularLocation>
        <location evidence="1">Cell inner membrane</location>
        <topology evidence="1">Peripheral membrane protein</topology>
        <orientation evidence="1">Cytoplasmic side</orientation>
    </subcellularLocation>
</comment>
<comment type="similarity">
    <text evidence="1">Belongs to the NAD(P)H dehydrogenase (quinone) family. KefF subfamily.</text>
</comment>
<keyword id="KW-0997">Cell inner membrane</keyword>
<keyword id="KW-1003">Cell membrane</keyword>
<keyword id="KW-0285">Flavoprotein</keyword>
<keyword id="KW-0288">FMN</keyword>
<keyword id="KW-0472">Membrane</keyword>
<keyword id="KW-0520">NAD</keyword>
<keyword id="KW-0560">Oxidoreductase</keyword>
<accession>A7ZVZ8</accession>